<gene>
    <name type="primary">sacB</name>
    <name type="ordered locus">NMA0200</name>
</gene>
<keyword id="KW-0270">Exopolysaccharide synthesis</keyword>
<keyword id="KW-0808">Transferase</keyword>
<name>SACB_NEIMA</name>
<sequence length="545" mass="64134">MFILNNRKWRKLKRDPSAFFRDSKFNFLRYFSAKKFAKNFKNSSHIHKTNISKAQSNISSTLKQNRKQDMLIPINFFNFEYIVKKLNNQNAIGVYILPSNLTLKPALCILESHKEDFLNKFLLTISSENLKLQYKFNGQIKNPKSVNEIWTDLFSIAHVDMKLSTDRTLSSSISQFWFRLEFCKEDKDFILFPTANRYSRKLWKHSIKNNQLFKEGIRNYSEISSLPYEEDHNFDIDLVFTWVNSEDKNWQELYKKYKPDFNSDATSTSRFLSRDELKFALRSWEMNGSFIRKIFIVSNCAPPAWLDLNNPKIQWVYHEEIMPQSALPTFSSHAIETSLHHIPGISNYFIYSNDDFLLTKPLNKDNFFYSNGIAKLRLEAWGNVNGECTEGEPDYLNGARNANTLLEKEFKKFTTKLHTHSPQSMRTDILFEMEKKYPEEFNRTLHNKFRSLDDIAVTGYLYHHYALLSGRALQSSDKTELVQQNHDFKKKLNNVVTLTKERNFDKLPLSVCINDGADSHLNEEWNVQVIKFLETLFPLPSSFEK</sequence>
<evidence type="ECO:0000250" key="1"/>
<evidence type="ECO:0000305" key="2"/>
<feature type="chain" id="PRO_0000235950" description="Capsular polysaccharide phosphotransferase SacB">
    <location>
        <begin position="1"/>
        <end position="545"/>
    </location>
</feature>
<reference key="1">
    <citation type="journal article" date="2000" name="Nature">
        <title>Complete DNA sequence of a serogroup A strain of Neisseria meningitidis Z2491.</title>
        <authorList>
            <person name="Parkhill J."/>
            <person name="Achtman M."/>
            <person name="James K.D."/>
            <person name="Bentley S.D."/>
            <person name="Churcher C.M."/>
            <person name="Klee S.R."/>
            <person name="Morelli G."/>
            <person name="Basham D."/>
            <person name="Brown D."/>
            <person name="Chillingworth T."/>
            <person name="Davies R.M."/>
            <person name="Davis P."/>
            <person name="Devlin K."/>
            <person name="Feltwell T."/>
            <person name="Hamlin N."/>
            <person name="Holroyd S."/>
            <person name="Jagels K."/>
            <person name="Leather S."/>
            <person name="Moule S."/>
            <person name="Mungall K.L."/>
            <person name="Quail M.A."/>
            <person name="Rajandream M.A."/>
            <person name="Rutherford K.M."/>
            <person name="Simmonds M."/>
            <person name="Skelton J."/>
            <person name="Whitehead S."/>
            <person name="Spratt B.G."/>
            <person name="Barrell B.G."/>
        </authorList>
    </citation>
    <scope>NUCLEOTIDE SEQUENCE [LARGE SCALE GENOMIC DNA]</scope>
    <source>
        <strain>DSM 15465 / Z2491</strain>
    </source>
</reference>
<reference key="2">
    <citation type="journal article" date="2005" name="PLoS Comput. Biol.">
        <title>Stealth proteins: in silico identification of a novel protein family rendering bacterial pathogens invisible to host immune defense.</title>
        <authorList>
            <person name="Sperisen P."/>
            <person name="Schmid C.D."/>
            <person name="Bucher P."/>
            <person name="Zilian O."/>
        </authorList>
    </citation>
    <scope>IDENTIFICATION AS A STEALTH PROTEIN</scope>
    <scope>PREDICTION OF FUNCTION</scope>
</reference>
<comment type="function">
    <text evidence="1">May be the polymerase that links individual UDP-N-acetyl-D-mannosamine monomers. In serotype A the capsule is composed of repeated units of (alpha 1-6)-linked N-acetyl-D-mannosamine-1-phosphate (By similarity).</text>
</comment>
<comment type="miscellaneous">
    <text>Stealth proteins are part of a protein family that is conserved from bacteria to higher eukaryotes. Family members were first identified in microbes as proteins that help pathogens to elude the host innate immune system. Microbial stealth proteins are involved in the biosynthesis of exopolysaccharides. Stealth proteins are predicted to function as hexose-1-phosphoryltransferases.</text>
</comment>
<comment type="similarity">
    <text evidence="2">Belongs to the stealth family.</text>
</comment>
<proteinExistence type="inferred from homology"/>
<organism>
    <name type="scientific">Neisseria meningitidis serogroup A / serotype 4A (strain DSM 15465 / Z2491)</name>
    <dbReference type="NCBI Taxonomy" id="122587"/>
    <lineage>
        <taxon>Bacteria</taxon>
        <taxon>Pseudomonadati</taxon>
        <taxon>Pseudomonadota</taxon>
        <taxon>Betaproteobacteria</taxon>
        <taxon>Neisseriales</taxon>
        <taxon>Neisseriaceae</taxon>
        <taxon>Neisseria</taxon>
    </lineage>
</organism>
<protein>
    <recommendedName>
        <fullName>Capsular polysaccharide phosphotransferase SacB</fullName>
        <ecNumber>2.7.-.-</ecNumber>
    </recommendedName>
    <alternativeName>
        <fullName>Stealth protein SacB</fullName>
    </alternativeName>
</protein>
<dbReference type="EC" id="2.7.-.-"/>
<dbReference type="EMBL" id="AL157959">
    <property type="protein sequence ID" value="CAM07514.1"/>
    <property type="molecule type" value="Genomic_DNA"/>
</dbReference>
<dbReference type="PIR" id="C82014">
    <property type="entry name" value="C82014"/>
</dbReference>
<dbReference type="RefSeq" id="WP_002236578.1">
    <property type="nucleotide sequence ID" value="NC_003116.1"/>
</dbReference>
<dbReference type="SMR" id="Q9JWW8"/>
<dbReference type="EnsemblBacteria" id="CAM07514">
    <property type="protein sequence ID" value="CAM07514"/>
    <property type="gene ID" value="NMA0200"/>
</dbReference>
<dbReference type="KEGG" id="nma:NMA0200"/>
<dbReference type="HOGENOM" id="CLU_499510_0_0_4"/>
<dbReference type="Proteomes" id="UP000000626">
    <property type="component" value="Chromosome"/>
</dbReference>
<dbReference type="GO" id="GO:0016772">
    <property type="term" value="F:transferase activity, transferring phosphorus-containing groups"/>
    <property type="evidence" value="ECO:0007669"/>
    <property type="project" value="InterPro"/>
</dbReference>
<dbReference type="GO" id="GO:0000271">
    <property type="term" value="P:polysaccharide biosynthetic process"/>
    <property type="evidence" value="ECO:0007669"/>
    <property type="project" value="UniProtKB-KW"/>
</dbReference>
<dbReference type="InterPro" id="IPR047141">
    <property type="entry name" value="Stealth"/>
</dbReference>
<dbReference type="InterPro" id="IPR031358">
    <property type="entry name" value="Stealth_CR1"/>
</dbReference>
<dbReference type="InterPro" id="IPR021520">
    <property type="entry name" value="Stealth_CR2"/>
</dbReference>
<dbReference type="InterPro" id="IPR031357">
    <property type="entry name" value="Stealth_CR3"/>
</dbReference>
<dbReference type="InterPro" id="IPR031356">
    <property type="entry name" value="Stealth_CR4"/>
</dbReference>
<dbReference type="PANTHER" id="PTHR24045">
    <property type="match status" value="1"/>
</dbReference>
<dbReference type="PANTHER" id="PTHR24045:SF0">
    <property type="entry name" value="N-ACETYLGLUCOSAMINE-1-PHOSPHOTRANSFERASE SUBUNITS ALPHA_BETA"/>
    <property type="match status" value="1"/>
</dbReference>
<dbReference type="Pfam" id="PF17101">
    <property type="entry name" value="Stealth_CR1"/>
    <property type="match status" value="1"/>
</dbReference>
<dbReference type="Pfam" id="PF11380">
    <property type="entry name" value="Stealth_CR2"/>
    <property type="match status" value="1"/>
</dbReference>
<dbReference type="Pfam" id="PF17102">
    <property type="entry name" value="Stealth_CR3"/>
    <property type="match status" value="1"/>
</dbReference>
<dbReference type="Pfam" id="PF17103">
    <property type="entry name" value="Stealth_CR4"/>
    <property type="match status" value="1"/>
</dbReference>
<accession>Q9JWW8</accession>
<accession>A1IP55</accession>